<name>YHEF_SCHPO</name>
<dbReference type="EMBL" id="CU329671">
    <property type="protein sequence ID" value="CAC21417.1"/>
    <property type="molecule type" value="Genomic_DNA"/>
</dbReference>
<dbReference type="RefSeq" id="NP_592768.1">
    <property type="nucleotide sequence ID" value="NM_001020931.1"/>
</dbReference>
<dbReference type="RefSeq" id="NP_596861.1">
    <property type="nucleotide sequence ID" value="NM_001023884.1"/>
</dbReference>
<dbReference type="STRING" id="284812.P0CU12"/>
<dbReference type="PaxDb" id="4896-SPBC1348.06c.1"/>
<dbReference type="EnsemblFungi" id="SPBC1348.06c.1">
    <property type="protein sequence ID" value="SPBC1348.06c.1:pep"/>
    <property type="gene ID" value="SPBC1348.06c"/>
</dbReference>
<dbReference type="EnsemblFungi" id="SPBPB2B2.15.1">
    <property type="protein sequence ID" value="SPBPB2B2.15.1:pep"/>
    <property type="gene ID" value="SPBPB2B2.15"/>
</dbReference>
<dbReference type="KEGG" id="spo:2541415"/>
<dbReference type="KEGG" id="spo:2543138"/>
<dbReference type="PomBase" id="SPBPB2B2.15"/>
<dbReference type="VEuPathDB" id="FungiDB:SPBC1348.06c"/>
<dbReference type="VEuPathDB" id="FungiDB:SPBPB2B2.15"/>
<dbReference type="eggNOG" id="ENOG502RZUS">
    <property type="taxonomic scope" value="Eukaryota"/>
</dbReference>
<dbReference type="InParanoid" id="P0CU12"/>
<dbReference type="OMA" id="GLHGPHC"/>
<dbReference type="PhylomeDB" id="P0CU12"/>
<dbReference type="PRO" id="PR:P0CU12"/>
<dbReference type="Proteomes" id="UP000002485">
    <property type="component" value="Chromosome II"/>
</dbReference>
<dbReference type="GO" id="GO:0005829">
    <property type="term" value="C:cytosol"/>
    <property type="evidence" value="ECO:0007669"/>
    <property type="project" value="UniProtKB-SubCell"/>
</dbReference>
<dbReference type="InterPro" id="IPR019435">
    <property type="entry name" value="Vel1-like"/>
</dbReference>
<dbReference type="Pfam" id="PF10339">
    <property type="entry name" value="Vel1p"/>
    <property type="match status" value="1"/>
</dbReference>
<keyword id="KW-0963">Cytoplasm</keyword>
<keyword id="KW-1185">Reference proteome</keyword>
<keyword id="KW-0732">Signal</keyword>
<keyword id="KW-0862">Zinc</keyword>
<accession>P0CU12</accession>
<accession>Q9P3V4</accession>
<evidence type="ECO:0000250" key="1"/>
<evidence type="ECO:0000255" key="2"/>
<evidence type="ECO:0000269" key="3">
    <source>
    </source>
</evidence>
<evidence type="ECO:0000305" key="4"/>
<comment type="subcellular location">
    <subcellularLocation>
        <location evidence="1">Cytoplasm</location>
        <location evidence="1">Cytosol</location>
    </subcellularLocation>
    <text evidence="1">Intracellular soluble fraction.</text>
</comment>
<comment type="induction">
    <text evidence="3">By zinc depletion.</text>
</comment>
<comment type="similarity">
    <text evidence="4">Belongs to the VEL1 family.</text>
</comment>
<reference key="1">
    <citation type="journal article" date="2002" name="Nature">
        <title>The genome sequence of Schizosaccharomyces pombe.</title>
        <authorList>
            <person name="Wood V."/>
            <person name="Gwilliam R."/>
            <person name="Rajandream M.A."/>
            <person name="Lyne M.H."/>
            <person name="Lyne R."/>
            <person name="Stewart A."/>
            <person name="Sgouros J.G."/>
            <person name="Peat N."/>
            <person name="Hayles J."/>
            <person name="Baker S.G."/>
            <person name="Basham D."/>
            <person name="Bowman S."/>
            <person name="Brooks K."/>
            <person name="Brown D."/>
            <person name="Brown S."/>
            <person name="Chillingworth T."/>
            <person name="Churcher C.M."/>
            <person name="Collins M."/>
            <person name="Connor R."/>
            <person name="Cronin A."/>
            <person name="Davis P."/>
            <person name="Feltwell T."/>
            <person name="Fraser A."/>
            <person name="Gentles S."/>
            <person name="Goble A."/>
            <person name="Hamlin N."/>
            <person name="Harris D.E."/>
            <person name="Hidalgo J."/>
            <person name="Hodgson G."/>
            <person name="Holroyd S."/>
            <person name="Hornsby T."/>
            <person name="Howarth S."/>
            <person name="Huckle E.J."/>
            <person name="Hunt S."/>
            <person name="Jagels K."/>
            <person name="James K.D."/>
            <person name="Jones L."/>
            <person name="Jones M."/>
            <person name="Leather S."/>
            <person name="McDonald S."/>
            <person name="McLean J."/>
            <person name="Mooney P."/>
            <person name="Moule S."/>
            <person name="Mungall K.L."/>
            <person name="Murphy L.D."/>
            <person name="Niblett D."/>
            <person name="Odell C."/>
            <person name="Oliver K."/>
            <person name="O'Neil S."/>
            <person name="Pearson D."/>
            <person name="Quail M.A."/>
            <person name="Rabbinowitsch E."/>
            <person name="Rutherford K.M."/>
            <person name="Rutter S."/>
            <person name="Saunders D."/>
            <person name="Seeger K."/>
            <person name="Sharp S."/>
            <person name="Skelton J."/>
            <person name="Simmonds M.N."/>
            <person name="Squares R."/>
            <person name="Squares S."/>
            <person name="Stevens K."/>
            <person name="Taylor K."/>
            <person name="Taylor R.G."/>
            <person name="Tivey A."/>
            <person name="Walsh S.V."/>
            <person name="Warren T."/>
            <person name="Whitehead S."/>
            <person name="Woodward J.R."/>
            <person name="Volckaert G."/>
            <person name="Aert R."/>
            <person name="Robben J."/>
            <person name="Grymonprez B."/>
            <person name="Weltjens I."/>
            <person name="Vanstreels E."/>
            <person name="Rieger M."/>
            <person name="Schaefer M."/>
            <person name="Mueller-Auer S."/>
            <person name="Gabel C."/>
            <person name="Fuchs M."/>
            <person name="Duesterhoeft A."/>
            <person name="Fritzc C."/>
            <person name="Holzer E."/>
            <person name="Moestl D."/>
            <person name="Hilbert H."/>
            <person name="Borzym K."/>
            <person name="Langer I."/>
            <person name="Beck A."/>
            <person name="Lehrach H."/>
            <person name="Reinhardt R."/>
            <person name="Pohl T.M."/>
            <person name="Eger P."/>
            <person name="Zimmermann W."/>
            <person name="Wedler H."/>
            <person name="Wambutt R."/>
            <person name="Purnelle B."/>
            <person name="Goffeau A."/>
            <person name="Cadieu E."/>
            <person name="Dreano S."/>
            <person name="Gloux S."/>
            <person name="Lelaure V."/>
            <person name="Mottier S."/>
            <person name="Galibert F."/>
            <person name="Aves S.J."/>
            <person name="Xiang Z."/>
            <person name="Hunt C."/>
            <person name="Moore K."/>
            <person name="Hurst S.M."/>
            <person name="Lucas M."/>
            <person name="Rochet M."/>
            <person name="Gaillardin C."/>
            <person name="Tallada V.A."/>
            <person name="Garzon A."/>
            <person name="Thode G."/>
            <person name="Daga R.R."/>
            <person name="Cruzado L."/>
            <person name="Jimenez J."/>
            <person name="Sanchez M."/>
            <person name="del Rey F."/>
            <person name="Benito J."/>
            <person name="Dominguez A."/>
            <person name="Revuelta J.L."/>
            <person name="Moreno S."/>
            <person name="Armstrong J."/>
            <person name="Forsburg S.L."/>
            <person name="Cerutti L."/>
            <person name="Lowe T."/>
            <person name="McCombie W.R."/>
            <person name="Paulsen I."/>
            <person name="Potashkin J."/>
            <person name="Shpakovski G.V."/>
            <person name="Ussery D."/>
            <person name="Barrell B.G."/>
            <person name="Nurse P."/>
        </authorList>
    </citation>
    <scope>NUCLEOTIDE SEQUENCE [LARGE SCALE GENOMIC DNA]</scope>
    <source>
        <strain>972 / ATCC 24843</strain>
    </source>
</reference>
<reference key="2">
    <citation type="journal article" date="2008" name="Eukaryot. Cell">
        <title>Response of Schizosaccharomyces pombe to zinc deficiency.</title>
        <authorList>
            <person name="Dainty S.J."/>
            <person name="Kennedy C.A."/>
            <person name="Watt S."/>
            <person name="Baehler J."/>
            <person name="Whitehall S.K."/>
        </authorList>
    </citation>
    <scope>INDUCTION BY ZINC DEPLETION</scope>
</reference>
<feature type="signal peptide" evidence="2">
    <location>
        <begin position="1"/>
        <end position="16"/>
    </location>
</feature>
<feature type="chain" id="PRO_0000326039" description="VEL1-related protein SPBPB2B2.15">
    <location>
        <begin position="17"/>
        <end position="203"/>
    </location>
</feature>
<gene>
    <name type="ORF">SPBPB2B2.15</name>
</gene>
<proteinExistence type="evidence at transcript level"/>
<protein>
    <recommendedName>
        <fullName>VEL1-related protein SPBPB2B2.15</fullName>
    </recommendedName>
</protein>
<sequence>MFKNLIFLFFIGLATAIRFNLTDLECSRLRGPHCGTYLLKVVGTNATYVGEKSFIGLDALTESKGEFFQRMLEQEPRLIPRLFTIAENDTANFTPLTFTTYLKTCNPQSIENAMIPFVNTVTSEISFDAWAYTAQNSSRITGLSNQLMNSTLYNVQVATCTPGFSALLLDSPTINVFNNEEGMPSWCQPIELTPVCPLDEGFN</sequence>
<organism>
    <name type="scientific">Schizosaccharomyces pombe (strain 972 / ATCC 24843)</name>
    <name type="common">Fission yeast</name>
    <dbReference type="NCBI Taxonomy" id="284812"/>
    <lineage>
        <taxon>Eukaryota</taxon>
        <taxon>Fungi</taxon>
        <taxon>Dikarya</taxon>
        <taxon>Ascomycota</taxon>
        <taxon>Taphrinomycotina</taxon>
        <taxon>Schizosaccharomycetes</taxon>
        <taxon>Schizosaccharomycetales</taxon>
        <taxon>Schizosaccharomycetaceae</taxon>
        <taxon>Schizosaccharomyces</taxon>
    </lineage>
</organism>